<name>CE192_HUMAN</name>
<feature type="chain" id="PRO_0000312495" description="Centrosomal protein of 192 kDa">
    <location>
        <begin position="1"/>
        <end position="2537"/>
    </location>
</feature>
<feature type="region of interest" description="Disordered" evidence="1">
    <location>
        <begin position="69"/>
        <end position="138"/>
    </location>
</feature>
<feature type="region of interest" description="Disordered" evidence="1">
    <location>
        <begin position="288"/>
        <end position="308"/>
    </location>
</feature>
<feature type="region of interest" description="Disordered" evidence="1">
    <location>
        <begin position="950"/>
        <end position="1021"/>
    </location>
</feature>
<feature type="region of interest" description="Disordered" evidence="1">
    <location>
        <begin position="1043"/>
        <end position="1064"/>
    </location>
</feature>
<feature type="region of interest" description="Disordered" evidence="1">
    <location>
        <begin position="1101"/>
        <end position="1158"/>
    </location>
</feature>
<feature type="region of interest" description="Disordered" evidence="1">
    <location>
        <begin position="1182"/>
        <end position="1234"/>
    </location>
</feature>
<feature type="compositionally biased region" description="Low complexity" evidence="1">
    <location>
        <begin position="70"/>
        <end position="81"/>
    </location>
</feature>
<feature type="compositionally biased region" description="Polar residues" evidence="1">
    <location>
        <begin position="106"/>
        <end position="122"/>
    </location>
</feature>
<feature type="compositionally biased region" description="Basic and acidic residues" evidence="1">
    <location>
        <begin position="288"/>
        <end position="298"/>
    </location>
</feature>
<feature type="compositionally biased region" description="Polar residues" evidence="1">
    <location>
        <begin position="960"/>
        <end position="970"/>
    </location>
</feature>
<feature type="compositionally biased region" description="Low complexity" evidence="1">
    <location>
        <begin position="984"/>
        <end position="1005"/>
    </location>
</feature>
<feature type="compositionally biased region" description="Polar residues" evidence="1">
    <location>
        <begin position="1046"/>
        <end position="1055"/>
    </location>
</feature>
<feature type="compositionally biased region" description="Polar residues" evidence="1">
    <location>
        <begin position="1103"/>
        <end position="1112"/>
    </location>
</feature>
<feature type="compositionally biased region" description="Basic and acidic residues" evidence="1">
    <location>
        <begin position="1128"/>
        <end position="1141"/>
    </location>
</feature>
<feature type="compositionally biased region" description="Polar residues" evidence="1">
    <location>
        <begin position="1142"/>
        <end position="1158"/>
    </location>
</feature>
<feature type="compositionally biased region" description="Basic and acidic residues" evidence="1">
    <location>
        <begin position="1195"/>
        <end position="1207"/>
    </location>
</feature>
<feature type="compositionally biased region" description="Polar residues" evidence="1">
    <location>
        <begin position="1213"/>
        <end position="1234"/>
    </location>
</feature>
<feature type="modified residue" description="Phosphoserine" evidence="21">
    <location>
        <position position="812"/>
    </location>
</feature>
<feature type="modified residue" description="Phosphoserine" evidence="21 22">
    <location>
        <position position="1755"/>
    </location>
</feature>
<feature type="modified residue" description="Phosphoserine" evidence="21">
    <location>
        <position position="2098"/>
    </location>
</feature>
<feature type="modified residue" description="Phosphoserine" evidence="21 22">
    <location>
        <position position="2110"/>
    </location>
</feature>
<feature type="modified residue" description="Hydroxyproline" evidence="11">
    <location>
        <position position="2313"/>
    </location>
</feature>
<feature type="splice variant" id="VSP_059657" description="In isoform 1 and isoform 2.">
    <original>MEDFRGIAEESFPSFLTNSLFGNSGILENVTLSSNLGLPVAVSTLARDRSSTDNRYPDIQASYLVEGRFSVPSGSSPGSQSDAEPRERLQLSFQDDDSISRKKSYVESQRLSNALSKQSALQMETAGPEEEPAGATESLQGQDLFNRASPLEQAQDSPIDFHLQSWMNNKEPKIVVLDAGKHFEDKTLKSDLSHTSLLENEKLILPTSLEDSSDDDIDDEMFYDDHLEAYFEQLAIPGMIYEDLEGPEPPEKGFKLPTNGLRQANENGSLNCKFQSENNSSLISLDSHSSETTHKESEESQVICLPGTSNSIGTGDSRRYTDGMLPFSSGTWGTEKEIENLKGIVPDLNSECASKDVLVKTLRAIDVKLNSDNFHDANANRGGFDLTDPVKQGAECPHQNKTVLHMDGCLDTETPTVSIQENVDVASLKPISDSGINFTDAIWSPTCERRTCECHESIEKNKDKTDLPQSVVYQNEEGRWVTDLAYYTSFNSKQNLNVSLSDEMNEDFRSGSEAFDLIAQDEEEFNKEHQFIQEENIDAHNTSVALGDTSWGATINYSLLRKSRSTSDLDKDDASYLRLSLGEFFAQRSEALGCLGGGNNVKR</original>
    <variation>MKTSDLV</variation>
    <location>
        <begin position="1"/>
        <end position="603"/>
    </location>
</feature>
<feature type="splice variant" id="VSP_059658" description="In isoform 2.">
    <original>ALLHK</original>
    <variation>QGPAT</variation>
    <location>
        <begin position="1999"/>
        <end position="2003"/>
    </location>
</feature>
<feature type="splice variant" id="VSP_059659" description="In isoform 2.">
    <location>
        <begin position="2004"/>
        <end position="2537"/>
    </location>
</feature>
<feature type="sequence variant" id="VAR_037514" description="In dbSNP:rs10048340.">
    <original>T</original>
    <variation>A</variation>
    <location>
        <position position="1053"/>
    </location>
</feature>
<feature type="sequence variant" id="VAR_050782" description="In dbSNP:rs11080623.">
    <original>Q</original>
    <variation>P</variation>
    <location>
        <position position="1109"/>
    </location>
</feature>
<feature type="sequence variant" id="VAR_037515" description="In dbSNP:rs2282542." evidence="2">
    <original>V</original>
    <variation>M</variation>
    <location>
        <position position="1365"/>
    </location>
</feature>
<feature type="sequence variant" id="VAR_050783" description="In dbSNP:rs7228940." evidence="2 7">
    <original>R</original>
    <variation>H</variation>
    <location>
        <position position="1544"/>
    </location>
</feature>
<feature type="sequence variant" id="VAR_050784" description="In dbSNP:rs578208." evidence="2 3 6 7">
    <original>S</original>
    <variation>P</variation>
    <location>
        <position position="1552"/>
    </location>
</feature>
<feature type="sequence variant" id="VAR_050785" description="In dbSNP:rs6505780." evidence="2 3 6 7">
    <original>L</original>
    <variation>F</variation>
    <location>
        <position position="1701"/>
    </location>
</feature>
<feature type="sequence variant" id="VAR_050786" description="In dbSNP:rs2027698." evidence="3">
    <original>S</original>
    <variation>N</variation>
    <location>
        <position position="2051"/>
    </location>
</feature>
<feature type="sequence variant" id="VAR_050787" description="In dbSNP:rs474337." evidence="2 3 5 6">
    <original>L</original>
    <variation>P</variation>
    <location>
        <position position="2121"/>
    </location>
</feature>
<feature type="sequence variant" id="VAR_050788" description="In dbSNP:rs3737379." evidence="3">
    <original>K</original>
    <variation>E</variation>
    <location>
        <position position="2271"/>
    </location>
</feature>
<feature type="sequence variant" id="VAR_050789" description="In dbSNP:rs1786263." evidence="2 3 5 6">
    <original>R</original>
    <variation>L</variation>
    <location>
        <position position="2449"/>
    </location>
</feature>
<feature type="mutagenesis site" description="Increased presence on interphasic centrosomes, and decreased presence on mitotic centrosomes; no ubiquitination and unchanged levels in response to hypoxia." evidence="11">
    <original>P</original>
    <variation>A</variation>
    <location>
        <position position="2313"/>
    </location>
</feature>
<feature type="sequence conflict" description="In Ref. 1; AIA61642." evidence="18" ref="1">
    <original>V</original>
    <variation>I</variation>
    <location>
        <position position="357"/>
    </location>
</feature>
<feature type="sequence conflict" description="In Ref. 4; BAB84900." evidence="18" ref="4">
    <original>R</original>
    <variation>L</variation>
    <location>
        <position position="1402"/>
    </location>
</feature>
<feature type="sequence conflict" description="In Ref. 5; AAL55870." evidence="18" ref="5">
    <original>P</original>
    <variation>A</variation>
    <location>
        <position position="1453"/>
    </location>
</feature>
<feature type="sequence conflict" description="In Ref. 3 and 7; AAI44482." evidence="18" ref="3 7">
    <original>R</original>
    <variation>Q</variation>
    <location>
        <position position="2115"/>
    </location>
</feature>
<feature type="helix" evidence="23">
    <location>
        <begin position="225"/>
        <end position="234"/>
    </location>
</feature>
<feature type="turn" evidence="23">
    <location>
        <begin position="237"/>
        <end position="240"/>
    </location>
</feature>
<feature type="strand" evidence="27">
    <location>
        <begin position="472"/>
        <end position="474"/>
    </location>
</feature>
<feature type="strand" evidence="27">
    <location>
        <begin position="480"/>
        <end position="482"/>
    </location>
</feature>
<feature type="helix" evidence="27">
    <location>
        <begin position="502"/>
        <end position="506"/>
    </location>
</feature>
<feature type="helix" evidence="26">
    <location>
        <begin position="512"/>
        <end position="525"/>
    </location>
</feature>
<feature type="strand" evidence="25">
    <location>
        <begin position="1765"/>
        <end position="1768"/>
    </location>
</feature>
<feature type="strand" evidence="25">
    <location>
        <begin position="1772"/>
        <end position="1777"/>
    </location>
</feature>
<feature type="strand" evidence="25">
    <location>
        <begin position="1783"/>
        <end position="1791"/>
    </location>
</feature>
<feature type="strand" evidence="25">
    <location>
        <begin position="1798"/>
        <end position="1806"/>
    </location>
</feature>
<feature type="helix" evidence="25">
    <location>
        <begin position="1809"/>
        <end position="1811"/>
    </location>
</feature>
<feature type="strand" evidence="25">
    <location>
        <begin position="1812"/>
        <end position="1814"/>
    </location>
</feature>
<feature type="strand" evidence="25">
    <location>
        <begin position="1817"/>
        <end position="1819"/>
    </location>
</feature>
<feature type="strand" evidence="25">
    <location>
        <begin position="1822"/>
        <end position="1825"/>
    </location>
</feature>
<feature type="strand" evidence="25">
    <location>
        <begin position="1828"/>
        <end position="1832"/>
    </location>
</feature>
<feature type="strand" evidence="25">
    <location>
        <begin position="1837"/>
        <end position="1844"/>
    </location>
</feature>
<feature type="strand" evidence="25">
    <location>
        <begin position="1848"/>
        <end position="1860"/>
    </location>
</feature>
<feature type="strand" evidence="25">
    <location>
        <begin position="1864"/>
        <end position="1866"/>
    </location>
</feature>
<feature type="strand" evidence="25">
    <location>
        <begin position="1869"/>
        <end position="1879"/>
    </location>
</feature>
<feature type="strand" evidence="25">
    <location>
        <begin position="1884"/>
        <end position="1891"/>
    </location>
</feature>
<feature type="strand" evidence="25">
    <location>
        <begin position="1893"/>
        <end position="1903"/>
    </location>
</feature>
<feature type="strand" evidence="25">
    <location>
        <begin position="1909"/>
        <end position="1917"/>
    </location>
</feature>
<feature type="strand" evidence="25">
    <location>
        <begin position="1919"/>
        <end position="1921"/>
    </location>
</feature>
<feature type="strand" evidence="25">
    <location>
        <begin position="1923"/>
        <end position="1932"/>
    </location>
</feature>
<feature type="turn" evidence="25">
    <location>
        <begin position="1933"/>
        <end position="1936"/>
    </location>
</feature>
<feature type="turn" evidence="25">
    <location>
        <begin position="1941"/>
        <end position="1943"/>
    </location>
</feature>
<feature type="strand" evidence="25">
    <location>
        <begin position="1944"/>
        <end position="1953"/>
    </location>
</feature>
<feature type="strand" evidence="25">
    <location>
        <begin position="1957"/>
        <end position="1965"/>
    </location>
</feature>
<feature type="strand" evidence="25">
    <location>
        <begin position="1975"/>
        <end position="1977"/>
    </location>
</feature>
<feature type="strand" evidence="25">
    <location>
        <begin position="1979"/>
        <end position="1989"/>
    </location>
</feature>
<feature type="helix" evidence="25">
    <location>
        <begin position="1990"/>
        <end position="2002"/>
    </location>
</feature>
<feature type="helix" evidence="25">
    <location>
        <begin position="2007"/>
        <end position="2010"/>
    </location>
</feature>
<feature type="helix" evidence="25">
    <location>
        <begin position="2016"/>
        <end position="2019"/>
    </location>
</feature>
<feature type="helix" evidence="25">
    <location>
        <begin position="2035"/>
        <end position="2037"/>
    </location>
</feature>
<feature type="helix" evidence="25">
    <location>
        <begin position="2044"/>
        <end position="2051"/>
    </location>
</feature>
<feature type="strand" evidence="25">
    <location>
        <begin position="2053"/>
        <end position="2063"/>
    </location>
</feature>
<feature type="helix" evidence="25">
    <location>
        <begin position="2064"/>
        <end position="2068"/>
    </location>
</feature>
<feature type="helix" evidence="24">
    <location>
        <begin position="2268"/>
        <end position="2270"/>
    </location>
</feature>
<feature type="strand" evidence="24">
    <location>
        <begin position="2272"/>
        <end position="2276"/>
    </location>
</feature>
<feature type="strand" evidence="24">
    <location>
        <begin position="2278"/>
        <end position="2280"/>
    </location>
</feature>
<feature type="strand" evidence="24">
    <location>
        <begin position="2290"/>
        <end position="2298"/>
    </location>
</feature>
<feature type="strand" evidence="24">
    <location>
        <begin position="2300"/>
        <end position="2302"/>
    </location>
</feature>
<feature type="strand" evidence="24">
    <location>
        <begin position="2304"/>
        <end position="2313"/>
    </location>
</feature>
<feature type="strand" evidence="24">
    <location>
        <begin position="2315"/>
        <end position="2317"/>
    </location>
</feature>
<feature type="strand" evidence="24">
    <location>
        <begin position="2319"/>
        <end position="2322"/>
    </location>
</feature>
<feature type="strand" evidence="24">
    <location>
        <begin position="2332"/>
        <end position="2336"/>
    </location>
</feature>
<feature type="strand" evidence="24">
    <location>
        <begin position="2339"/>
        <end position="2342"/>
    </location>
</feature>
<feature type="strand" evidence="24">
    <location>
        <begin position="2347"/>
        <end position="2354"/>
    </location>
</feature>
<feature type="strand" evidence="24">
    <location>
        <begin position="2357"/>
        <end position="2372"/>
    </location>
</feature>
<feature type="strand" evidence="24">
    <location>
        <begin position="2380"/>
        <end position="2390"/>
    </location>
</feature>
<reference key="1">
    <citation type="journal article" date="2014" name="Mol. Cell">
        <title>The Cep192-organized aurora A-Plk1 cascade is essential for centrosome cycle and bipolar spindle assembly.</title>
        <authorList>
            <person name="Joukov V."/>
            <person name="Walter J.C."/>
            <person name="De Nicolo A."/>
        </authorList>
    </citation>
    <scope>NUCLEOTIDE SEQUENCE [MRNA] (ISOFORM 3)</scope>
    <scope>FUNCTION</scope>
</reference>
<reference key="2">
    <citation type="journal article" date="2005" name="Nature">
        <title>DNA sequence and analysis of human chromosome 18.</title>
        <authorList>
            <person name="Nusbaum C."/>
            <person name="Zody M.C."/>
            <person name="Borowsky M.L."/>
            <person name="Kamal M."/>
            <person name="Kodira C.D."/>
            <person name="Taylor T.D."/>
            <person name="Whittaker C.A."/>
            <person name="Chang J.L."/>
            <person name="Cuomo C.A."/>
            <person name="Dewar K."/>
            <person name="FitzGerald M.G."/>
            <person name="Yang X."/>
            <person name="Abouelleil A."/>
            <person name="Allen N.R."/>
            <person name="Anderson S."/>
            <person name="Bloom T."/>
            <person name="Bugalter B."/>
            <person name="Butler J."/>
            <person name="Cook A."/>
            <person name="DeCaprio D."/>
            <person name="Engels R."/>
            <person name="Garber M."/>
            <person name="Gnirke A."/>
            <person name="Hafez N."/>
            <person name="Hall J.L."/>
            <person name="Norman C.H."/>
            <person name="Itoh T."/>
            <person name="Jaffe D.B."/>
            <person name="Kuroki Y."/>
            <person name="Lehoczky J."/>
            <person name="Lui A."/>
            <person name="Macdonald P."/>
            <person name="Mauceli E."/>
            <person name="Mikkelsen T.S."/>
            <person name="Naylor J.W."/>
            <person name="Nicol R."/>
            <person name="Nguyen C."/>
            <person name="Noguchi H."/>
            <person name="O'Leary S.B."/>
            <person name="Piqani B."/>
            <person name="Smith C.L."/>
            <person name="Talamas J.A."/>
            <person name="Topham K."/>
            <person name="Totoki Y."/>
            <person name="Toyoda A."/>
            <person name="Wain H.M."/>
            <person name="Young S.K."/>
            <person name="Zeng Q."/>
            <person name="Zimmer A.R."/>
            <person name="Fujiyama A."/>
            <person name="Hattori M."/>
            <person name="Birren B.W."/>
            <person name="Sakaki Y."/>
            <person name="Lander E.S."/>
        </authorList>
    </citation>
    <scope>NUCLEOTIDE SEQUENCE [LARGE SCALE GENOMIC DNA]</scope>
</reference>
<reference key="3">
    <citation type="journal article" date="2001" name="Genome Res.">
        <title>Towards a catalog of human genes and proteins: sequencing and analysis of 500 novel complete protein coding human cDNAs.</title>
        <authorList>
            <person name="Wiemann S."/>
            <person name="Weil B."/>
            <person name="Wellenreuther R."/>
            <person name="Gassenhuber J."/>
            <person name="Glassl S."/>
            <person name="Ansorge W."/>
            <person name="Boecher M."/>
            <person name="Bloecker H."/>
            <person name="Bauersachs S."/>
            <person name="Blum H."/>
            <person name="Lauber J."/>
            <person name="Duesterhoeft A."/>
            <person name="Beyer A."/>
            <person name="Koehrer K."/>
            <person name="Strack N."/>
            <person name="Mewes H.-W."/>
            <person name="Ottenwaelder B."/>
            <person name="Obermaier B."/>
            <person name="Tampe J."/>
            <person name="Heubner D."/>
            <person name="Wambutt R."/>
            <person name="Korn B."/>
            <person name="Klein M."/>
            <person name="Poustka A."/>
        </authorList>
    </citation>
    <scope>NUCLEOTIDE SEQUENCE [LARGE SCALE MRNA] OF 757-2537 (ISOFORM 1)</scope>
    <scope>VARIANTS MET-1365; HIS-1544; PRO-1552; PHE-1701; PRO-2121 AND LEU-2449</scope>
    <source>
        <tissue>Testis</tissue>
    </source>
</reference>
<reference key="4">
    <citation type="journal article" date="2003" name="DNA Res.">
        <title>Characterization of long cDNA clones from human adult spleen. II. The complete sequences of 81 cDNA clones.</title>
        <authorList>
            <person name="Jikuya H."/>
            <person name="Takano J."/>
            <person name="Kikuno R."/>
            <person name="Hirosawa M."/>
            <person name="Nagase T."/>
            <person name="Nomura N."/>
            <person name="Ohara O."/>
        </authorList>
    </citation>
    <scope>NUCLEOTIDE SEQUENCE [LARGE SCALE MRNA] OF 797-2537 (ISOFORM 1)</scope>
    <scope>VARIANTS PRO-1552; PHE-1701; ASN-2051; PRO-2121; GLU-2271 AND LEU-2449</scope>
    <source>
        <tissue>Spleen</tissue>
    </source>
</reference>
<reference key="5">
    <citation type="journal article" date="2004" name="Proc. Natl. Acad. Sci. U.S.A.">
        <title>Large-scale cDNA transfection screening for genes related to cancer development and progression.</title>
        <authorList>
            <person name="Wan D."/>
            <person name="Gong Y."/>
            <person name="Qin W."/>
            <person name="Zhang P."/>
            <person name="Li J."/>
            <person name="Wei L."/>
            <person name="Zhou X."/>
            <person name="Li H."/>
            <person name="Qiu X."/>
            <person name="Zhong F."/>
            <person name="He L."/>
            <person name="Yu J."/>
            <person name="Yao G."/>
            <person name="Jiang H."/>
            <person name="Qian L."/>
            <person name="Yu Y."/>
            <person name="Shu H."/>
            <person name="Chen X."/>
            <person name="Xu H."/>
            <person name="Guo M."/>
            <person name="Pan Z."/>
            <person name="Chen Y."/>
            <person name="Ge C."/>
            <person name="Yang S."/>
            <person name="Gu J."/>
        </authorList>
    </citation>
    <scope>NUCLEOTIDE SEQUENCE [LARGE SCALE MRNA] OF 1453-2537 (ISOFORM 2)</scope>
    <scope>VARIANTS HIS-1544; PRO-1552 AND PHE-1701</scope>
</reference>
<reference key="6">
    <citation type="journal article" date="2004" name="Nat. Genet.">
        <title>Complete sequencing and characterization of 21,243 full-length human cDNAs.</title>
        <authorList>
            <person name="Ota T."/>
            <person name="Suzuki Y."/>
            <person name="Nishikawa T."/>
            <person name="Otsuki T."/>
            <person name="Sugiyama T."/>
            <person name="Irie R."/>
            <person name="Wakamatsu A."/>
            <person name="Hayashi K."/>
            <person name="Sato H."/>
            <person name="Nagai K."/>
            <person name="Kimura K."/>
            <person name="Makita H."/>
            <person name="Sekine M."/>
            <person name="Obayashi M."/>
            <person name="Nishi T."/>
            <person name="Shibahara T."/>
            <person name="Tanaka T."/>
            <person name="Ishii S."/>
            <person name="Yamamoto J."/>
            <person name="Saito K."/>
            <person name="Kawai Y."/>
            <person name="Isono Y."/>
            <person name="Nakamura Y."/>
            <person name="Nagahari K."/>
            <person name="Murakami K."/>
            <person name="Yasuda T."/>
            <person name="Iwayanagi T."/>
            <person name="Wagatsuma M."/>
            <person name="Shiratori A."/>
            <person name="Sudo H."/>
            <person name="Hosoiri T."/>
            <person name="Kaku Y."/>
            <person name="Kodaira H."/>
            <person name="Kondo H."/>
            <person name="Sugawara M."/>
            <person name="Takahashi M."/>
            <person name="Kanda K."/>
            <person name="Yokoi T."/>
            <person name="Furuya T."/>
            <person name="Kikkawa E."/>
            <person name="Omura Y."/>
            <person name="Abe K."/>
            <person name="Kamihara K."/>
            <person name="Katsuta N."/>
            <person name="Sato K."/>
            <person name="Tanikawa M."/>
            <person name="Yamazaki M."/>
            <person name="Ninomiya K."/>
            <person name="Ishibashi T."/>
            <person name="Yamashita H."/>
            <person name="Murakawa K."/>
            <person name="Fujimori K."/>
            <person name="Tanai H."/>
            <person name="Kimata M."/>
            <person name="Watanabe M."/>
            <person name="Hiraoka S."/>
            <person name="Chiba Y."/>
            <person name="Ishida S."/>
            <person name="Ono Y."/>
            <person name="Takiguchi S."/>
            <person name="Watanabe S."/>
            <person name="Yosida M."/>
            <person name="Hotuta T."/>
            <person name="Kusano J."/>
            <person name="Kanehori K."/>
            <person name="Takahashi-Fujii A."/>
            <person name="Hara H."/>
            <person name="Tanase T.-O."/>
            <person name="Nomura Y."/>
            <person name="Togiya S."/>
            <person name="Komai F."/>
            <person name="Hara R."/>
            <person name="Takeuchi K."/>
            <person name="Arita M."/>
            <person name="Imose N."/>
            <person name="Musashino K."/>
            <person name="Yuuki H."/>
            <person name="Oshima A."/>
            <person name="Sasaki N."/>
            <person name="Aotsuka S."/>
            <person name="Yoshikawa Y."/>
            <person name="Matsunawa H."/>
            <person name="Ichihara T."/>
            <person name="Shiohata N."/>
            <person name="Sano S."/>
            <person name="Moriya S."/>
            <person name="Momiyama H."/>
            <person name="Satoh N."/>
            <person name="Takami S."/>
            <person name="Terashima Y."/>
            <person name="Suzuki O."/>
            <person name="Nakagawa S."/>
            <person name="Senoh A."/>
            <person name="Mizoguchi H."/>
            <person name="Goto Y."/>
            <person name="Shimizu F."/>
            <person name="Wakebe H."/>
            <person name="Hishigaki H."/>
            <person name="Watanabe T."/>
            <person name="Sugiyama A."/>
            <person name="Takemoto M."/>
            <person name="Kawakami B."/>
            <person name="Yamazaki M."/>
            <person name="Watanabe K."/>
            <person name="Kumagai A."/>
            <person name="Itakura S."/>
            <person name="Fukuzumi Y."/>
            <person name="Fujimori Y."/>
            <person name="Komiyama M."/>
            <person name="Tashiro H."/>
            <person name="Tanigami A."/>
            <person name="Fujiwara T."/>
            <person name="Ono T."/>
            <person name="Yamada K."/>
            <person name="Fujii Y."/>
            <person name="Ozaki K."/>
            <person name="Hirao M."/>
            <person name="Ohmori Y."/>
            <person name="Kawabata A."/>
            <person name="Hikiji T."/>
            <person name="Kobatake N."/>
            <person name="Inagaki H."/>
            <person name="Ikema Y."/>
            <person name="Okamoto S."/>
            <person name="Okitani R."/>
            <person name="Kawakami T."/>
            <person name="Noguchi S."/>
            <person name="Itoh T."/>
            <person name="Shigeta K."/>
            <person name="Senba T."/>
            <person name="Matsumura K."/>
            <person name="Nakajima Y."/>
            <person name="Mizuno T."/>
            <person name="Morinaga M."/>
            <person name="Sasaki M."/>
            <person name="Togashi T."/>
            <person name="Oyama M."/>
            <person name="Hata H."/>
            <person name="Watanabe M."/>
            <person name="Komatsu T."/>
            <person name="Mizushima-Sugano J."/>
            <person name="Satoh T."/>
            <person name="Shirai Y."/>
            <person name="Takahashi Y."/>
            <person name="Nakagawa K."/>
            <person name="Okumura K."/>
            <person name="Nagase T."/>
            <person name="Nomura N."/>
            <person name="Kikuchi H."/>
            <person name="Masuho Y."/>
            <person name="Yamashita R."/>
            <person name="Nakai K."/>
            <person name="Yada T."/>
            <person name="Nakamura Y."/>
            <person name="Ohara O."/>
            <person name="Isogai T."/>
            <person name="Sugano S."/>
        </authorList>
    </citation>
    <scope>NUCLEOTIDE SEQUENCE [LARGE SCALE MRNA] OF 1958-2537 (ISOFORM 1)</scope>
    <scope>VARIANTS PRO-2121 AND LEU-2449</scope>
</reference>
<reference key="7">
    <citation type="journal article" date="2004" name="Genome Res.">
        <title>The status, quality, and expansion of the NIH full-length cDNA project: the Mammalian Gene Collection (MGC).</title>
        <authorList>
            <consortium name="The MGC Project Team"/>
        </authorList>
    </citation>
    <scope>PARTIAL NUCLEOTIDE SEQUENCE [LARGE SCALE MRNA] (ISOFORM 3)</scope>
    <scope>VARIANTS PRO-1552; PHE-1701; PRO-2121 AND LEU-2449</scope>
    <source>
        <tissue>Brain</tissue>
    </source>
</reference>
<reference key="8">
    <citation type="journal article" date="2003" name="Nature">
        <title>Proteomic characterization of the human centrosome by protein correlation profiling.</title>
        <authorList>
            <person name="Andersen J.S."/>
            <person name="Wilkinson C.J."/>
            <person name="Mayor T."/>
            <person name="Mortensen P."/>
            <person name="Nigg E.A."/>
            <person name="Mann M."/>
        </authorList>
    </citation>
    <scope>IDENTIFICATION BY MASS SPECTROMETRY</scope>
    <scope>SUBCELLULAR LOCATION [LARGE SCALE ANALYSIS]</scope>
    <source>
        <tissue>Lymphoblast</tissue>
    </source>
</reference>
<reference key="9">
    <citation type="journal article" date="2005" name="J. Steroid Biochem. Mol. Biol.">
        <title>Yeast two-hybrid identification of prostatic proteins interacting with human sex hormone-binding globulin.</title>
        <authorList>
            <person name="Pope S.N."/>
            <person name="Lee I.R."/>
        </authorList>
    </citation>
    <scope>INTERACTION WITH SHBG</scope>
</reference>
<reference key="10">
    <citation type="journal article" date="2007" name="Curr. Biol.">
        <title>Human Cep192 is required for mitotic centrosome and spindle assembly.</title>
        <authorList>
            <person name="Gomez-Ferreria M.A."/>
            <person name="Rath U."/>
            <person name="Buster D.W."/>
            <person name="Chanda S.K."/>
            <person name="Caldwell J.S."/>
            <person name="Rines D.R."/>
            <person name="Sharp D.J."/>
        </authorList>
    </citation>
    <scope>FUNCTION</scope>
    <scope>SUBCELLULAR LOCATION</scope>
</reference>
<reference key="11">
    <citation type="journal article" date="2008" name="Curr. Biol.">
        <title>The mammalian SPD-2 ortholog Cep192 regulates centrosome biogenesis.</title>
        <authorList>
            <person name="Zhu F."/>
            <person name="Lawo S."/>
            <person name="Bird A."/>
            <person name="Pinchev D."/>
            <person name="Ralph A."/>
            <person name="Richter C."/>
            <person name="Mueller-Reichert T."/>
            <person name="Kittler R."/>
            <person name="Hyman A.A."/>
            <person name="Pelletier L."/>
        </authorList>
    </citation>
    <scope>FUNCTION</scope>
    <scope>SUBCELLULAR LOCATION</scope>
</reference>
<reference key="12">
    <citation type="journal article" date="2008" name="Proc. Natl. Acad. Sci. U.S.A.">
        <title>A quantitative atlas of mitotic phosphorylation.</title>
        <authorList>
            <person name="Dephoure N."/>
            <person name="Zhou C."/>
            <person name="Villen J."/>
            <person name="Beausoleil S.A."/>
            <person name="Bakalarski C.E."/>
            <person name="Elledge S.J."/>
            <person name="Gygi S.P."/>
        </authorList>
    </citation>
    <scope>IDENTIFICATION BY MASS SPECTROMETRY [LARGE SCALE ANALYSIS]</scope>
    <source>
        <tissue>Cervix carcinoma</tissue>
    </source>
</reference>
<reference key="13">
    <citation type="journal article" date="2009" name="Anal. Chem.">
        <title>Lys-N and trypsin cover complementary parts of the phosphoproteome in a refined SCX-based approach.</title>
        <authorList>
            <person name="Gauci S."/>
            <person name="Helbig A.O."/>
            <person name="Slijper M."/>
            <person name="Krijgsveld J."/>
            <person name="Heck A.J."/>
            <person name="Mohammed S."/>
        </authorList>
    </citation>
    <scope>IDENTIFICATION BY MASS SPECTROMETRY [LARGE SCALE ANALYSIS]</scope>
</reference>
<reference key="14">
    <citation type="journal article" date="2010" name="Sci. Signal.">
        <title>Quantitative phosphoproteomics reveals widespread full phosphorylation site occupancy during mitosis.</title>
        <authorList>
            <person name="Olsen J.V."/>
            <person name="Vermeulen M."/>
            <person name="Santamaria A."/>
            <person name="Kumar C."/>
            <person name="Miller M.L."/>
            <person name="Jensen L.J."/>
            <person name="Gnad F."/>
            <person name="Cox J."/>
            <person name="Jensen T.S."/>
            <person name="Nigg E.A."/>
            <person name="Brunak S."/>
            <person name="Mann M."/>
        </authorList>
    </citation>
    <scope>PHOSPHORYLATION [LARGE SCALE ANALYSIS] AT SER-812; SER-1755; SER-2098 AND SER-2110</scope>
    <scope>IDENTIFICATION BY MASS SPECTROMETRY [LARGE SCALE ANALYSIS]</scope>
    <source>
        <tissue>Cervix carcinoma</tissue>
    </source>
</reference>
<reference key="15">
    <citation type="journal article" date="2013" name="Dev. Cell">
        <title>PHD1 links cell-cycle progression to oxygen sensing through hydroxylation of the centrosomal protein Cep192.</title>
        <authorList>
            <person name="Moser S.C."/>
            <person name="Bensaddek D."/>
            <person name="Ortmann B."/>
            <person name="Maure J.F."/>
            <person name="Mudie S."/>
            <person name="Blow J.J."/>
            <person name="Lamond A.I."/>
            <person name="Swedlow J.R."/>
            <person name="Rocha S."/>
        </authorList>
    </citation>
    <scope>HYDROXYLATION AT PRO-2313</scope>
    <scope>UBIQUITINATION</scope>
    <scope>MUTAGENESIS OF PRO-2313</scope>
</reference>
<reference key="16">
    <citation type="journal article" date="2013" name="J. Proteome Res.">
        <title>Toward a comprehensive characterization of a human cancer cell phosphoproteome.</title>
        <authorList>
            <person name="Zhou H."/>
            <person name="Di Palma S."/>
            <person name="Preisinger C."/>
            <person name="Peng M."/>
            <person name="Polat A.N."/>
            <person name="Heck A.J."/>
            <person name="Mohammed S."/>
        </authorList>
    </citation>
    <scope>PHOSPHORYLATION [LARGE SCALE ANALYSIS] AT SER-1755 AND SER-2110</scope>
    <scope>IDENTIFICATION BY MASS SPECTROMETRY [LARGE SCALE ANALYSIS]</scope>
    <source>
        <tissue>Cervix carcinoma</tissue>
        <tissue>Erythroleukemia</tissue>
    </source>
</reference>
<reference key="17">
    <citation type="journal article" date="2014" name="J. Proteomics">
        <title>An enzyme assisted RP-RPLC approach for in-depth analysis of human liver phosphoproteome.</title>
        <authorList>
            <person name="Bian Y."/>
            <person name="Song C."/>
            <person name="Cheng K."/>
            <person name="Dong M."/>
            <person name="Wang F."/>
            <person name="Huang J."/>
            <person name="Sun D."/>
            <person name="Wang L."/>
            <person name="Ye M."/>
            <person name="Zou H."/>
        </authorList>
    </citation>
    <scope>IDENTIFICATION BY MASS SPECTROMETRY [LARGE SCALE ANALYSIS]</scope>
    <source>
        <tissue>Liver</tissue>
    </source>
</reference>
<reference key="18">
    <citation type="journal article" date="2018" name="EMBO Rep.">
        <title>FBXL13 directs the proteolysis of CEP192 to regulate centrosome homeostasis and cell migration.</title>
        <authorList>
            <person name="Fung E."/>
            <person name="Richter C."/>
            <person name="Yang H.B."/>
            <person name="Schaeffer I."/>
            <person name="Fischer R."/>
            <person name="Kessler B.M."/>
            <person name="Bassermann F."/>
            <person name="D'Angiolella V."/>
        </authorList>
    </citation>
    <scope>UBIQUITINATION (ISOFORM 3)</scope>
</reference>
<reference key="19">
    <citation type="journal article" date="2020" name="Nat. Commun.">
        <title>CEP44 ensures the formation of bona fide centriole wall, a requirement for the centriole-to-centrosome conversion.</title>
        <authorList>
            <person name="Atorino E.S."/>
            <person name="Hata S."/>
            <person name="Funaya C."/>
            <person name="Neuner A."/>
            <person name="Schiebel E."/>
        </authorList>
    </citation>
    <scope>SUBCELLULAR LOCATION</scope>
</reference>
<reference key="20">
    <citation type="journal article" date="2022" name="PLoS Biol.">
        <title>The ciliopathy protein CCDC66 controls mitotic progression and cytokinesis by promoting microtubule nucleation and organization.</title>
        <authorList>
            <person name="Batman U."/>
            <person name="Deretic J."/>
            <person name="Firat-Karalar E.N."/>
        </authorList>
    </citation>
    <scope>SUBCELLULAR LOCATION</scope>
    <scope>INTERACTION WITH CCDC66</scope>
</reference>
<reference evidence="20" key="21">
    <citation type="journal article" date="2020" name="Structure">
        <title>Structural and Functional Analyses of the FAM46C/Plk4 Complex.</title>
        <authorList>
            <person name="Chen H."/>
            <person name="Lu D."/>
            <person name="Shang G."/>
            <person name="Gao G."/>
            <person name="Zhang X."/>
        </authorList>
    </citation>
    <scope>X-RAY CRYSTALLOGRAPHY (2.85 ANGSTROMS) OF 217-238 IN COMPLEXES WITH PLK4 AND TENTC</scope>
</reference>
<dbReference type="EMBL" id="KJ567064">
    <property type="protein sequence ID" value="AIA61642.1"/>
    <property type="molecule type" value="mRNA"/>
</dbReference>
<dbReference type="EMBL" id="AP001357">
    <property type="status" value="NOT_ANNOTATED_CDS"/>
    <property type="molecule type" value="Genomic_DNA"/>
</dbReference>
<dbReference type="EMBL" id="AP002449">
    <property type="status" value="NOT_ANNOTATED_CDS"/>
    <property type="molecule type" value="Genomic_DNA"/>
</dbReference>
<dbReference type="EMBL" id="AL136818">
    <property type="protein sequence ID" value="CAB66752.1"/>
    <property type="status" value="ALT_SEQ"/>
    <property type="molecule type" value="mRNA"/>
</dbReference>
<dbReference type="EMBL" id="AK074074">
    <property type="protein sequence ID" value="BAB84900.1"/>
    <property type="molecule type" value="mRNA"/>
</dbReference>
<dbReference type="EMBL" id="AF318363">
    <property type="protein sequence ID" value="AAL55870.1"/>
    <property type="status" value="ALT_INIT"/>
    <property type="molecule type" value="mRNA"/>
</dbReference>
<dbReference type="EMBL" id="AK001214">
    <property type="protein sequence ID" value="BAA91559.1"/>
    <property type="status" value="ALT_INIT"/>
    <property type="molecule type" value="mRNA"/>
</dbReference>
<dbReference type="EMBL" id="BC144481">
    <property type="protein sequence ID" value="AAI44482.1"/>
    <property type="molecule type" value="mRNA"/>
</dbReference>
<dbReference type="CCDS" id="CCDS32792.2">
    <molecule id="Q8TEP8-3"/>
</dbReference>
<dbReference type="RefSeq" id="NP_115518.3">
    <molecule id="Q8TEP8-3"/>
    <property type="nucleotide sequence ID" value="NM_032142.3"/>
</dbReference>
<dbReference type="PDB" id="4N7Z">
    <property type="method" value="X-ray"/>
    <property type="resolution" value="2.85 A"/>
    <property type="chains" value="B=1134-1191"/>
</dbReference>
<dbReference type="PDB" id="6FVI">
    <property type="method" value="X-ray"/>
    <property type="resolution" value="1.00 A"/>
    <property type="chains" value="A=2256-2402"/>
</dbReference>
<dbReference type="PDB" id="6W3J">
    <property type="method" value="X-ray"/>
    <property type="resolution" value="4.38 A"/>
    <property type="chains" value="C=217-238"/>
</dbReference>
<dbReference type="PDB" id="7PTB">
    <property type="method" value="X-ray"/>
    <property type="resolution" value="2.08 A"/>
    <property type="chains" value="A=1743-2092"/>
</dbReference>
<dbReference type="PDB" id="8GUW">
    <property type="method" value="X-ray"/>
    <property type="resolution" value="2.70 A"/>
    <property type="chains" value="A/B/C=506-527"/>
</dbReference>
<dbReference type="PDB" id="8PR7">
    <property type="method" value="X-ray"/>
    <property type="resolution" value="2.76 A"/>
    <property type="chains" value="C/F=468-533"/>
</dbReference>
<dbReference type="PDBsum" id="4N7Z"/>
<dbReference type="PDBsum" id="6FVI"/>
<dbReference type="PDBsum" id="6W3J"/>
<dbReference type="PDBsum" id="7PTB"/>
<dbReference type="PDBsum" id="8GUW"/>
<dbReference type="PDBsum" id="8PR7"/>
<dbReference type="SMR" id="Q8TEP8"/>
<dbReference type="ComplexPortal" id="CPX-1161">
    <property type="entry name" value="CEP192-PLK4 complex"/>
</dbReference>
<dbReference type="DIP" id="DIP-52779N"/>
<dbReference type="FunCoup" id="Q8TEP8">
    <property type="interactions" value="2103"/>
</dbReference>
<dbReference type="IntAct" id="Q8TEP8">
    <property type="interactions" value="181"/>
</dbReference>
<dbReference type="MINT" id="Q8TEP8"/>
<dbReference type="STRING" id="9606.ENSP00000427550"/>
<dbReference type="GlyGen" id="Q8TEP8">
    <property type="glycosylation" value="3 sites, 1 N-linked glycan (1 site), 1 O-linked glycan (1 site)"/>
</dbReference>
<dbReference type="iPTMnet" id="Q8TEP8"/>
<dbReference type="PhosphoSitePlus" id="Q8TEP8"/>
<dbReference type="BioMuta" id="CEP192"/>
<dbReference type="DMDM" id="162416230"/>
<dbReference type="jPOST" id="Q8TEP8"/>
<dbReference type="MassIVE" id="Q8TEP8"/>
<dbReference type="PaxDb" id="9606-ENSP00000427550"/>
<dbReference type="PeptideAtlas" id="Q8TEP8"/>
<dbReference type="ProteomicsDB" id="20058"/>
<dbReference type="ProteomicsDB" id="74474">
    <molecule id="Q8TEP8-1"/>
</dbReference>
<dbReference type="ProteomicsDB" id="74475">
    <molecule id="Q8TEP8-2"/>
</dbReference>
<dbReference type="Pumba" id="Q8TEP8"/>
<dbReference type="Antibodypedia" id="21958">
    <property type="antibodies" value="75 antibodies from 16 providers"/>
</dbReference>
<dbReference type="DNASU" id="55125"/>
<dbReference type="Ensembl" id="ENST00000506447.5">
    <molecule id="Q8TEP8-3"/>
    <property type="protein sequence ID" value="ENSP00000427550.1"/>
    <property type="gene ID" value="ENSG00000101639.19"/>
</dbReference>
<dbReference type="GeneID" id="55125"/>
<dbReference type="KEGG" id="hsa:55125"/>
<dbReference type="MANE-Select" id="ENST00000506447.5">
    <property type="protein sequence ID" value="ENSP00000427550.1"/>
    <property type="RefSeq nucleotide sequence ID" value="NM_032142.4"/>
    <property type="RefSeq protein sequence ID" value="NP_115518.3"/>
</dbReference>
<dbReference type="UCSC" id="uc010xac.3">
    <molecule id="Q8TEP8-3"/>
    <property type="organism name" value="human"/>
</dbReference>
<dbReference type="AGR" id="HGNC:25515"/>
<dbReference type="CTD" id="55125"/>
<dbReference type="DisGeNET" id="55125"/>
<dbReference type="GeneCards" id="CEP192"/>
<dbReference type="HGNC" id="HGNC:25515">
    <property type="gene designation" value="CEP192"/>
</dbReference>
<dbReference type="HPA" id="ENSG00000101639">
    <property type="expression patterns" value="Low tissue specificity"/>
</dbReference>
<dbReference type="MIM" id="616426">
    <property type="type" value="gene"/>
</dbReference>
<dbReference type="neXtProt" id="NX_Q8TEP8"/>
<dbReference type="OpenTargets" id="ENSG00000101639"/>
<dbReference type="PharmGKB" id="PA142672129"/>
<dbReference type="VEuPathDB" id="HostDB:ENSG00000101639"/>
<dbReference type="eggNOG" id="ENOG502QQMZ">
    <property type="taxonomic scope" value="Eukaryota"/>
</dbReference>
<dbReference type="GeneTree" id="ENSGT00510000048187"/>
<dbReference type="InParanoid" id="Q8TEP8"/>
<dbReference type="OMA" id="PPCHAGS"/>
<dbReference type="OrthoDB" id="67059at2759"/>
<dbReference type="PAN-GO" id="Q8TEP8">
    <property type="GO annotations" value="7 GO annotations based on evolutionary models"/>
</dbReference>
<dbReference type="PhylomeDB" id="Q8TEP8"/>
<dbReference type="TreeFam" id="TF329535"/>
<dbReference type="PathwayCommons" id="Q8TEP8"/>
<dbReference type="Reactome" id="R-HSA-2565942">
    <property type="pathway name" value="Regulation of PLK1 Activity at G2/M Transition"/>
</dbReference>
<dbReference type="Reactome" id="R-HSA-380259">
    <property type="pathway name" value="Loss of Nlp from mitotic centrosomes"/>
</dbReference>
<dbReference type="Reactome" id="R-HSA-380270">
    <property type="pathway name" value="Recruitment of mitotic centrosome proteins and complexes"/>
</dbReference>
<dbReference type="Reactome" id="R-HSA-380284">
    <property type="pathway name" value="Loss of proteins required for interphase microtubule organization from the centrosome"/>
</dbReference>
<dbReference type="Reactome" id="R-HSA-380320">
    <property type="pathway name" value="Recruitment of NuMA to mitotic centrosomes"/>
</dbReference>
<dbReference type="Reactome" id="R-HSA-5620912">
    <property type="pathway name" value="Anchoring of the basal body to the plasma membrane"/>
</dbReference>
<dbReference type="Reactome" id="R-HSA-8854518">
    <property type="pathway name" value="AURKA Activation by TPX2"/>
</dbReference>
<dbReference type="SignaLink" id="Q8TEP8"/>
<dbReference type="SIGNOR" id="Q8TEP8"/>
<dbReference type="BioGRID-ORCS" id="55125">
    <property type="hits" value="556 hits in 1157 CRISPR screens"/>
</dbReference>
<dbReference type="CD-CODE" id="232F8A39">
    <property type="entry name" value="P-body"/>
</dbReference>
<dbReference type="CD-CODE" id="8C2F96ED">
    <property type="entry name" value="Centrosome"/>
</dbReference>
<dbReference type="CD-CODE" id="DEE660B4">
    <property type="entry name" value="Stress granule"/>
</dbReference>
<dbReference type="ChiTaRS" id="CEP192">
    <property type="organism name" value="human"/>
</dbReference>
<dbReference type="GenomeRNAi" id="55125"/>
<dbReference type="Pharos" id="Q8TEP8">
    <property type="development level" value="Tbio"/>
</dbReference>
<dbReference type="PRO" id="PR:Q8TEP8"/>
<dbReference type="Proteomes" id="UP000005640">
    <property type="component" value="Chromosome 18"/>
</dbReference>
<dbReference type="RNAct" id="Q8TEP8">
    <property type="molecule type" value="protein"/>
</dbReference>
<dbReference type="Bgee" id="ENSG00000101639">
    <property type="expression patterns" value="Expressed in ventricular zone and 170 other cell types or tissues"/>
</dbReference>
<dbReference type="ExpressionAtlas" id="Q8TEP8">
    <property type="expression patterns" value="baseline and differential"/>
</dbReference>
<dbReference type="GO" id="GO:0005814">
    <property type="term" value="C:centriole"/>
    <property type="evidence" value="ECO:0000314"/>
    <property type="project" value="UniProtKB"/>
</dbReference>
<dbReference type="GO" id="GO:0005813">
    <property type="term" value="C:centrosome"/>
    <property type="evidence" value="ECO:0000314"/>
    <property type="project" value="UniProtKB"/>
</dbReference>
<dbReference type="GO" id="GO:0005737">
    <property type="term" value="C:cytoplasm"/>
    <property type="evidence" value="ECO:0000318"/>
    <property type="project" value="GO_Central"/>
</dbReference>
<dbReference type="GO" id="GO:0005829">
    <property type="term" value="C:cytosol"/>
    <property type="evidence" value="ECO:0000304"/>
    <property type="project" value="Reactome"/>
</dbReference>
<dbReference type="GO" id="GO:0000242">
    <property type="term" value="C:pericentriolar material"/>
    <property type="evidence" value="ECO:0000318"/>
    <property type="project" value="GO_Central"/>
</dbReference>
<dbReference type="GO" id="GO:0120098">
    <property type="term" value="C:procentriole"/>
    <property type="evidence" value="ECO:0000314"/>
    <property type="project" value="ComplexPortal"/>
</dbReference>
<dbReference type="GO" id="GO:0120099">
    <property type="term" value="C:procentriole replication complex"/>
    <property type="evidence" value="ECO:0000353"/>
    <property type="project" value="ComplexPortal"/>
</dbReference>
<dbReference type="GO" id="GO:0019902">
    <property type="term" value="F:phosphatase binding"/>
    <property type="evidence" value="ECO:0000314"/>
    <property type="project" value="UniProtKB"/>
</dbReference>
<dbReference type="GO" id="GO:0007099">
    <property type="term" value="P:centriole replication"/>
    <property type="evidence" value="ECO:0000303"/>
    <property type="project" value="ComplexPortal"/>
</dbReference>
<dbReference type="GO" id="GO:0007098">
    <property type="term" value="P:centrosome cycle"/>
    <property type="evidence" value="ECO:0000318"/>
    <property type="project" value="GO_Central"/>
</dbReference>
<dbReference type="GO" id="GO:0090222">
    <property type="term" value="P:centrosome-templated microtubule nucleation"/>
    <property type="evidence" value="ECO:0000315"/>
    <property type="project" value="UniProtKB"/>
</dbReference>
<dbReference type="GO" id="GO:0090307">
    <property type="term" value="P:mitotic spindle assembly"/>
    <property type="evidence" value="ECO:0000315"/>
    <property type="project" value="UniProtKB"/>
</dbReference>
<dbReference type="GO" id="GO:0071539">
    <property type="term" value="P:protein localization to centrosome"/>
    <property type="evidence" value="ECO:0000315"/>
    <property type="project" value="UniProtKB"/>
</dbReference>
<dbReference type="GO" id="GO:0009617">
    <property type="term" value="P:response to bacterium"/>
    <property type="evidence" value="ECO:0007669"/>
    <property type="project" value="Ensembl"/>
</dbReference>
<dbReference type="CDD" id="cd21856">
    <property type="entry name" value="Plk4BD_Cep192"/>
    <property type="match status" value="1"/>
</dbReference>
<dbReference type="DisProt" id="DP02627"/>
<dbReference type="FunFam" id="2.60.40.10:FF:001609">
    <property type="entry name" value="Centrosomal protein 192"/>
    <property type="match status" value="1"/>
</dbReference>
<dbReference type="FunFam" id="2.60.40.10:FF:000681">
    <property type="entry name" value="Centrosomal protein of 192 kDa"/>
    <property type="match status" value="1"/>
</dbReference>
<dbReference type="FunFam" id="2.60.40.10:FF:001246">
    <property type="entry name" value="Centrosomal protein of 192 kDa"/>
    <property type="match status" value="1"/>
</dbReference>
<dbReference type="Gene3D" id="2.60.40.10">
    <property type="entry name" value="Immunoglobulins"/>
    <property type="match status" value="3"/>
</dbReference>
<dbReference type="InterPro" id="IPR054085">
    <property type="entry name" value="Cep192-like_D1"/>
</dbReference>
<dbReference type="InterPro" id="IPR054086">
    <property type="entry name" value="Cep192-like_D2"/>
</dbReference>
<dbReference type="InterPro" id="IPR054089">
    <property type="entry name" value="Cep192-like_D3"/>
</dbReference>
<dbReference type="InterPro" id="IPR054091">
    <property type="entry name" value="Cep192-like_D5"/>
</dbReference>
<dbReference type="InterPro" id="IPR054092">
    <property type="entry name" value="Cep192-like_D6"/>
</dbReference>
<dbReference type="InterPro" id="IPR054087">
    <property type="entry name" value="Cep192-like_D7"/>
</dbReference>
<dbReference type="InterPro" id="IPR054088">
    <property type="entry name" value="Cep192-like_D8"/>
</dbReference>
<dbReference type="InterPro" id="IPR054090">
    <property type="entry name" value="Cep192_Spd-2-like_dom"/>
</dbReference>
<dbReference type="InterPro" id="IPR013783">
    <property type="entry name" value="Ig-like_fold"/>
</dbReference>
<dbReference type="InterPro" id="IPR039103">
    <property type="entry name" value="Spd-2/CEP192"/>
</dbReference>
<dbReference type="PANTHER" id="PTHR16029">
    <property type="entry name" value="CENTROSOMAL PROTEIN OF 192 KDA"/>
    <property type="match status" value="1"/>
</dbReference>
<dbReference type="PANTHER" id="PTHR16029:SF11">
    <property type="entry name" value="CENTROSOMAL PROTEIN OF 192 KDA"/>
    <property type="match status" value="1"/>
</dbReference>
<dbReference type="Pfam" id="PF22060">
    <property type="entry name" value="Cep192_D1"/>
    <property type="match status" value="1"/>
</dbReference>
<dbReference type="Pfam" id="PF22064">
    <property type="entry name" value="Cep192_D2"/>
    <property type="match status" value="1"/>
</dbReference>
<dbReference type="Pfam" id="PF22067">
    <property type="entry name" value="Cep192_D3"/>
    <property type="match status" value="1"/>
</dbReference>
<dbReference type="Pfam" id="PF22073">
    <property type="entry name" value="Cep192_D4"/>
    <property type="match status" value="1"/>
</dbReference>
<dbReference type="Pfam" id="PF22074">
    <property type="entry name" value="Cep192_D5"/>
    <property type="match status" value="1"/>
</dbReference>
<dbReference type="Pfam" id="PF22076">
    <property type="entry name" value="Cep192_D6"/>
    <property type="match status" value="1"/>
</dbReference>
<dbReference type="Pfam" id="PF22065">
    <property type="entry name" value="Cep192_D7"/>
    <property type="match status" value="1"/>
</dbReference>
<dbReference type="Pfam" id="PF22066">
    <property type="entry name" value="Cep192_D8"/>
    <property type="match status" value="1"/>
</dbReference>
<gene>
    <name evidence="19" type="primary">CEP192</name>
    <name type="synonym">KIAA1569</name>
    <name type="ORF">PP8407</name>
</gene>
<proteinExistence type="evidence at protein level"/>
<evidence type="ECO:0000256" key="1">
    <source>
        <dbReference type="SAM" id="MobiDB-lite"/>
    </source>
</evidence>
<evidence type="ECO:0000269" key="2">
    <source>
    </source>
</evidence>
<evidence type="ECO:0000269" key="3">
    <source>
    </source>
</evidence>
<evidence type="ECO:0000269" key="4">
    <source>
    </source>
</evidence>
<evidence type="ECO:0000269" key="5">
    <source>
    </source>
</evidence>
<evidence type="ECO:0000269" key="6">
    <source>
    </source>
</evidence>
<evidence type="ECO:0000269" key="7">
    <source>
    </source>
</evidence>
<evidence type="ECO:0000269" key="8">
    <source>
    </source>
</evidence>
<evidence type="ECO:0000269" key="9">
    <source>
    </source>
</evidence>
<evidence type="ECO:0000269" key="10">
    <source>
    </source>
</evidence>
<evidence type="ECO:0000269" key="11">
    <source>
    </source>
</evidence>
<evidence type="ECO:0000269" key="12">
    <source>
    </source>
</evidence>
<evidence type="ECO:0000269" key="13">
    <source>
    </source>
</evidence>
<evidence type="ECO:0000269" key="14">
    <source>
    </source>
</evidence>
<evidence type="ECO:0000269" key="15">
    <source>
    </source>
</evidence>
<evidence type="ECO:0000269" key="16">
    <source>
    </source>
</evidence>
<evidence type="ECO:0000303" key="17">
    <source>
    </source>
</evidence>
<evidence type="ECO:0000305" key="18"/>
<evidence type="ECO:0000312" key="19">
    <source>
        <dbReference type="HGNC" id="HGNC:25515"/>
    </source>
</evidence>
<evidence type="ECO:0007744" key="20">
    <source>
        <dbReference type="PDB" id="6W3J"/>
    </source>
</evidence>
<evidence type="ECO:0007744" key="21">
    <source>
    </source>
</evidence>
<evidence type="ECO:0007744" key="22">
    <source>
    </source>
</evidence>
<evidence type="ECO:0007829" key="23">
    <source>
        <dbReference type="PDB" id="4N7Z"/>
    </source>
</evidence>
<evidence type="ECO:0007829" key="24">
    <source>
        <dbReference type="PDB" id="6FVI"/>
    </source>
</evidence>
<evidence type="ECO:0007829" key="25">
    <source>
        <dbReference type="PDB" id="7PTB"/>
    </source>
</evidence>
<evidence type="ECO:0007829" key="26">
    <source>
        <dbReference type="PDB" id="8GUW"/>
    </source>
</evidence>
<evidence type="ECO:0007829" key="27">
    <source>
        <dbReference type="PDB" id="8PR7"/>
    </source>
</evidence>
<protein>
    <recommendedName>
        <fullName evidence="18">Centrosomal protein of 192 kDa</fullName>
        <shortName>Cep192</shortName>
        <shortName evidence="17">Cep192/SPD-2</shortName>
    </recommendedName>
</protein>
<accession>Q8TEP8</accession>
<accession>A0A060A9S4</accession>
<accession>B7ZMF0</accession>
<accession>E9PF99</accession>
<accession>Q8WYT8</accession>
<accession>Q9H0F4</accession>
<accession>Q9NW27</accession>
<keyword id="KW-0002">3D-structure</keyword>
<keyword id="KW-0025">Alternative splicing</keyword>
<keyword id="KW-0963">Cytoplasm</keyword>
<keyword id="KW-0206">Cytoskeleton</keyword>
<keyword id="KW-0379">Hydroxylation</keyword>
<keyword id="KW-0597">Phosphoprotein</keyword>
<keyword id="KW-1267">Proteomics identification</keyword>
<keyword id="KW-1185">Reference proteome</keyword>
<keyword id="KW-0832">Ubl conjugation</keyword>
<sequence length="2537" mass="279111">MEDFRGIAEESFPSFLTNSLFGNSGILENVTLSSNLGLPVAVSTLARDRSSTDNRYPDIQASYLVEGRFSVPSGSSPGSQSDAEPRERLQLSFQDDDSISRKKSYVESQRLSNALSKQSALQMETAGPEEEPAGATESLQGQDLFNRASPLEQAQDSPIDFHLQSWMNNKEPKIVVLDAGKHFEDKTLKSDLSHTSLLENEKLILPTSLEDSSDDDIDDEMFYDDHLEAYFEQLAIPGMIYEDLEGPEPPEKGFKLPTNGLRQANENGSLNCKFQSENNSSLISLDSHSSETTHKESEESQVICLPGTSNSIGTGDSRRYTDGMLPFSSGTWGTEKEIENLKGIVPDLNSECASKDVLVKTLRAIDVKLNSDNFHDANANRGGFDLTDPVKQGAECPHQNKTVLHMDGCLDTETPTVSIQENVDVASLKPISDSGINFTDAIWSPTCERRTCECHESIEKNKDKTDLPQSVVYQNEEGRWVTDLAYYTSFNSKQNLNVSLSDEMNEDFRSGSEAFDLIAQDEEEFNKEHQFIQEENIDAHNTSVALGDTSWGATINYSLLRKSRSTSDLDKDDASYLRLSLGEFFAQRSEALGCLGGGNNVKRPSFGYFIRSPEKREPIALIRKSDVSRGNLEKEMAHLNHDLYSGDLNEQSQAQLSEGSITLQVEAVESTSQVDENDVTLTADKGKTEDTFFMSNKPQRYKDKLPDSGDSMLRISTIASAIAEASVNTDPSQLAAMIKALSNKTRDKTFQEDEKQKDYSHVRHFLPNDLEKSNGSNALDMEKYLKKTEVSRYESALENFSRASMSDTWDLSLPKEQTTQDIHPVDLSATSVSVRAPEENTAAIVYVENGESENQESFRTINSSNSVTNRENNSAVVDVKTCSIDNKLQDVGNDEKATSISTPSDSYSSVRNPRITSLCLLKDCEEIRDNRENQRQNECVSEISNSEKHVTFENHRIVSPKNSDLKNTSPEHGGRGSEDEQESFRPSTSPLSHSSPSEISGTSSSGCALESFGSAAQQQQPPCEQELSPLVCSPAGVSRLTYVSEPESSYPTTATDDALEDRKSDITSELSTTIIQGSPAALEERAMEKLREKVPFQNRGKGTLSSIIQNNSDTRKATETTSLSSKPEYVKPDFRWSKDPSSKSGNLLETSEVGWTSNPEELDPIRLALLGKSGLSCQVGSATSHPVSCQEPIDEDQRISPKDKSTAGREFSGQVSHQTTSENQCTPIPSSTVHSSVADMQNMPAAVHALLTQPSLSAAPFAQRYLGTLPSTGSTTLPQCHAGNATVCGFSGGLPYPAVAGEPVQNSVAVGICLGSNIGSGWMGTSSLCNPYSNTLNQNLLSTTKPFPVPSVGTNCGIEPWDSGVTSGLGSVRVPEELKLPHACCVGIASQTLLSVLNPTDRWLQVSIGVLSISVNGEKVDLSTYRCLVFKNKAIIRPHATEEIKVLFIPSSPGVFRCTFSVASWPCSTDAETIVQAEALASTVTLTAIAESPVIEVETEKKDVLDFGDLTYGGWKALPLKLINRTHATVPIRLIINANAVAWRCFTFSKESVRAPVEVAPCADVVTRLAGPSVVNHMMPASYDGQDPEFLMIWVLFHSPKKQISSSDILDSAEEFSAKVDIEVDSPNPTPVLRSVSLRARAGIARIHAPRDLQTMHFLAKVASSRKQHLPLKNAGNIEVYLDIKVPEQGSHFSVDPKNLLLKPGEEHEVIVSFTPKDPEACEERILKIFVQPFGPQYEVVLKGEVISSGSKPLSPGPCLDIPSILSNKQFLAWGGVPLGRTQLQKLALRNNSASTTQHLRLLIRGQDQDCFQLQNTFGSEQRLTSNCEIRIHPKEDIFISVLFAPTRLSCMLARLEIKQLGNRSQPGIKFTIPLSGYGGTSNLILEGVKKLSDSYMVTVNGLVPGKESKIVFSVRNTGSRAAFVKAVGFKDSQKKVLLDPKVLRIFPDKFVLKERTQENVTLIYNPSDRGINNKTATELSTVYLFGGDEISRQQYRRALLHKPEMIKQILPEHSVLQNINFVEAFQDELLVTEVYDLPQRPNDVQLFYGSMCKIILSVIGEFRDCISSREFLQPSSKASLESTSDLGASGKHGGNVSLDVLPVKGPQGSPLLSRAARPPLDQLASEEPWTVLPEHLILVAPSPCDMAKTGRFQIVNNSVRLLRFELCWPAHCLTVTPQHGCVAPESKLQILVSPNSSLSTKQSMFPWSGLIYIHCDDGQKKIVKVQIREDLTQVELLTRLTSKPFGILSPVSEPSVSHLVKPMTKPPSTKVEIRNKSITFPTTEPGETSESCLELENHGTTDVKWHLSSLAPPYVKGVDESGDVFRATYAAFRCSPISGLLESHGIQKVSITFLPRGRGDYAQFWDVECHPLKEPHMKHTLRFQLSGQSIEAENEPENACLSTDSLIKIDHLVKPRRQAVSEASARIPEQLDVTARGVYAPEDVYRFRPTSVGESRTLKVNLRNNSFITHSLKFLSPREPFYVKHSKYSLRAQHYINMPVQFKPKSAGKFEALLVIQTDEGKSIAIRLIGEALGKN</sequence>
<organism>
    <name type="scientific">Homo sapiens</name>
    <name type="common">Human</name>
    <dbReference type="NCBI Taxonomy" id="9606"/>
    <lineage>
        <taxon>Eukaryota</taxon>
        <taxon>Metazoa</taxon>
        <taxon>Chordata</taxon>
        <taxon>Craniata</taxon>
        <taxon>Vertebrata</taxon>
        <taxon>Euteleostomi</taxon>
        <taxon>Mammalia</taxon>
        <taxon>Eutheria</taxon>
        <taxon>Euarchontoglires</taxon>
        <taxon>Primates</taxon>
        <taxon>Haplorrhini</taxon>
        <taxon>Catarrhini</taxon>
        <taxon>Hominidae</taxon>
        <taxon>Homo</taxon>
    </lineage>
</organism>
<comment type="function">
    <text evidence="9 10 12">Required for mitotic centrosome maturation and bipolar spindle assembly (PubMed:17980596, PubMed:18207742, PubMed:25042804). Appears to be a major regulator of pericentriolar material (PCM) recruitment, centrosome maturation, and centriole duplication (PubMed:17980596, PubMed:18207742, PubMed:25042804). Centrosome-specific activating scaffold for AURKA and PLK1 (PubMed:25042804).</text>
</comment>
<comment type="subunit">
    <text evidence="8 15 16">Interacts with SHBG (PubMed:15862967). Interacts with PLK4; this interaction mediates the formation of a ternary complex composed by PLK4, TENT5C and CEP192 (PubMed:32433990). Interacts with CCDC66 (PubMed:35849559).</text>
</comment>
<comment type="interaction">
    <interactant intactId="EBI-2339778">
        <id>Q8TEP8</id>
    </interactant>
    <interactant intactId="EBI-723569">
        <id>Q9H773</id>
        <label>DCTPP1</label>
    </interactant>
    <organismsDiffer>false</organismsDiffer>
    <experiments>2</experiments>
</comment>
<comment type="interaction">
    <interactant intactId="EBI-2339778">
        <id>Q8TEP8</id>
    </interactant>
    <interactant intactId="EBI-2371082">
        <id>Q9UKX7</id>
        <label>NUP50</label>
    </interactant>
    <organismsDiffer>false</organismsDiffer>
    <experiments>4</experiments>
</comment>
<comment type="interaction">
    <interactant intactId="EBI-2339778">
        <id>Q8TEP8</id>
    </interactant>
    <interactant intactId="EBI-746202">
        <id>O00444</id>
        <label>PLK4</label>
    </interactant>
    <organismsDiffer>false</organismsDiffer>
    <experiments>2</experiments>
</comment>
<comment type="interaction">
    <interactant intactId="EBI-2339778">
        <id>Q8TEP8</id>
    </interactant>
    <interactant intactId="EBI-357253">
        <id>P62136</id>
        <label>PPP1CA</label>
    </interactant>
    <organismsDiffer>false</organismsDiffer>
    <experiments>2</experiments>
</comment>
<comment type="interaction">
    <interactant intactId="EBI-16111881">
        <id>Q8TEP8-3</id>
    </interactant>
    <interactant intactId="EBI-746202">
        <id>O00444</id>
        <label>PLK4</label>
    </interactant>
    <organismsDiffer>false</organismsDiffer>
    <experiments>13</experiments>
</comment>
<comment type="subcellular location">
    <subcellularLocation>
        <location evidence="4 9 10 14">Cytoplasm</location>
        <location evidence="4 9 10 14">Cytoskeleton</location>
        <location evidence="4 9 10 14">Microtubule organizing center</location>
        <location evidence="4 9 10 14">Centrosome</location>
        <location evidence="4 9 10 14">Centriole</location>
    </subcellularLocation>
    <subcellularLocation>
        <location evidence="16">Cytoplasm</location>
        <location evidence="16">Cytoskeleton</location>
        <location evidence="16">Microtubule organizing center</location>
        <location evidence="16">Centrosome</location>
    </subcellularLocation>
    <text>Pericentriolar location in mitotic centrosomes.</text>
</comment>
<comment type="alternative products">
    <event type="alternative splicing"/>
    <isoform>
        <id>Q8TEP8-3</id>
        <name>3</name>
        <sequence type="displayed"/>
    </isoform>
    <isoform>
        <id>Q8TEP8-1</id>
        <name>1</name>
        <sequence type="described" ref="VSP_059657"/>
    </isoform>
    <isoform>
        <id>Q8TEP8-2</id>
        <name>2</name>
        <sequence type="described" ref="VSP_059657 VSP_059658 VSP_059659"/>
    </isoform>
</comment>
<comment type="PTM">
    <text evidence="11">Hydroxylation by PHD1/EGLN2 at Pro-2313 promotes ubiquitination.</text>
</comment>
<comment type="PTM">
    <text evidence="11">Ubiquitinated by a SCF(SKP2) complex following proline hydroxylation.</text>
</comment>
<comment type="PTM">
    <molecule>Isoform 3</molecule>
    <text evidence="13">Ubiquitinated in a FBXL13-dependent manner, leading to proteasomal degradation.</text>
</comment>
<comment type="sequence caution" evidence="18">
    <conflict type="erroneous initiation">
        <sequence resource="EMBL-CDS" id="AAL55870"/>
    </conflict>
    <text>Truncated N-terminus.</text>
</comment>
<comment type="sequence caution" evidence="18">
    <conflict type="erroneous initiation">
        <sequence resource="EMBL-CDS" id="BAA91559"/>
    </conflict>
    <text>Truncated N-terminus.</text>
</comment>
<comment type="sequence caution" evidence="18">
    <conflict type="erroneous initiation">
        <sequence resource="EMBL-CDS" id="CAB66752"/>
    </conflict>
    <text>Truncated N-terminus.</text>
</comment>
<comment type="sequence caution" evidence="18">
    <conflict type="frameshift">
        <sequence resource="EMBL-CDS" id="CAB66752"/>
    </conflict>
</comment>